<keyword id="KW-1185">Reference proteome</keyword>
<dbReference type="EMBL" id="AF303741">
    <property type="protein sequence ID" value="AAK82238.1"/>
    <property type="molecule type" value="Genomic_DNA"/>
</dbReference>
<dbReference type="RefSeq" id="NP_149841.1">
    <property type="nucleotide sequence ID" value="NC_003038.1"/>
</dbReference>
<dbReference type="KEGG" id="vg:1733276"/>
<dbReference type="OrthoDB" id="15540at10239"/>
<dbReference type="Proteomes" id="UP000001359">
    <property type="component" value="Genome"/>
</dbReference>
<dbReference type="InterPro" id="IPR014901">
    <property type="entry name" value="2-cysteine_adaptor"/>
</dbReference>
<dbReference type="Pfam" id="PF08793">
    <property type="entry name" value="2C_adapt"/>
    <property type="match status" value="1"/>
</dbReference>
<evidence type="ECO:0000256" key="1">
    <source>
        <dbReference type="SAM" id="MobiDB-lite"/>
    </source>
</evidence>
<evidence type="ECO:0000305" key="2"/>
<gene>
    <name type="ORF">IIV6-378R</name>
</gene>
<comment type="similarity">
    <text evidence="2">Belongs to the IIV-6 378R family.</text>
</comment>
<reference key="1">
    <citation type="journal article" date="2001" name="Virology">
        <title>Analysis of the first complete DNA sequence of an invertebrate iridovirus: coding strategy of the genome of Chilo iridescent virus.</title>
        <authorList>
            <person name="Jakob N.J."/>
            <person name="Mueller K."/>
            <person name="Bahr U."/>
            <person name="Darai G."/>
        </authorList>
    </citation>
    <scope>NUCLEOTIDE SEQUENCE [LARGE SCALE GENOMIC DNA]</scope>
</reference>
<reference key="2">
    <citation type="journal article" date="2007" name="Virol. J.">
        <title>Comparative genomic analysis of the family Iridoviridae: re-annotating and defining the core set of iridovirus genes.</title>
        <authorList>
            <person name="Eaton H.E."/>
            <person name="Metcalf J."/>
            <person name="Penny E."/>
            <person name="Tcherepanov V."/>
            <person name="Upton C."/>
            <person name="Brunetti C.R."/>
        </authorList>
    </citation>
    <scope>GENOME REANNOTATION</scope>
</reference>
<proteinExistence type="inferred from homology"/>
<sequence>MTSKCSKWHEQPLINPLTNRKIKKNGPTYKELERECGPPPRRSSPRRSSPRRSPRRSSPRRSSPRRSSPRRSSPRRSNQRIQLYCGNNARDEGLINGTKTLGTRYQCLKKGIGKGLNEPILKYNNDYEPIENVRIYCGNGALPNNKDRFGTRDECLRKGFAVGQKQKYIRDGGIQRGPIVVEENGWYKAYLPR</sequence>
<accession>Q91FE6</accession>
<feature type="chain" id="PRO_0000377875" description="Uncharacterized protein 378R">
    <location>
        <begin position="1"/>
        <end position="193"/>
    </location>
</feature>
<feature type="region of interest" description="Disordered" evidence="1">
    <location>
        <begin position="1"/>
        <end position="84"/>
    </location>
</feature>
<feature type="compositionally biased region" description="Basic residues" evidence="1">
    <location>
        <begin position="43"/>
        <end position="78"/>
    </location>
</feature>
<organism>
    <name type="scientific">Invertebrate iridescent virus 6</name>
    <name type="common">IIV-6</name>
    <name type="synonym">Chilo iridescent virus</name>
    <dbReference type="NCBI Taxonomy" id="176652"/>
    <lineage>
        <taxon>Viruses</taxon>
        <taxon>Varidnaviria</taxon>
        <taxon>Bamfordvirae</taxon>
        <taxon>Nucleocytoviricota</taxon>
        <taxon>Megaviricetes</taxon>
        <taxon>Pimascovirales</taxon>
        <taxon>Iridoviridae</taxon>
        <taxon>Betairidovirinae</taxon>
        <taxon>Iridovirus</taxon>
    </lineage>
</organism>
<organismHost>
    <name type="scientific">Acheta domesticus</name>
    <name type="common">House cricket</name>
    <dbReference type="NCBI Taxonomy" id="6997"/>
</organismHost>
<organismHost>
    <name type="scientific">Chilo suppressalis</name>
    <name type="common">Asiatic rice borer moth</name>
    <dbReference type="NCBI Taxonomy" id="168631"/>
</organismHost>
<organismHost>
    <name type="scientific">Gryllus bimaculatus</name>
    <name type="common">Two-spotted cricket</name>
    <dbReference type="NCBI Taxonomy" id="6999"/>
</organismHost>
<organismHost>
    <name type="scientific">Gryllus campestris</name>
    <dbReference type="NCBI Taxonomy" id="58607"/>
</organismHost>
<organismHost>
    <name type="scientific">Spodoptera frugiperda</name>
    <name type="common">Fall armyworm</name>
    <dbReference type="NCBI Taxonomy" id="7108"/>
</organismHost>
<name>VF378_IIV6</name>
<protein>
    <recommendedName>
        <fullName>Uncharacterized protein 378R</fullName>
    </recommendedName>
</protein>